<organism>
    <name type="scientific">Salmonella typhimurium (strain LT2 / SGSC1412 / ATCC 700720)</name>
    <dbReference type="NCBI Taxonomy" id="99287"/>
    <lineage>
        <taxon>Bacteria</taxon>
        <taxon>Pseudomonadati</taxon>
        <taxon>Pseudomonadota</taxon>
        <taxon>Gammaproteobacteria</taxon>
        <taxon>Enterobacterales</taxon>
        <taxon>Enterobacteriaceae</taxon>
        <taxon>Salmonella</taxon>
    </lineage>
</organism>
<protein>
    <recommendedName>
        <fullName evidence="1">Transcriptional regulator SlyA</fullName>
    </recommendedName>
    <alternativeName>
        <fullName>Cytolysin SlyA</fullName>
    </alternativeName>
    <alternativeName>
        <fullName>Salmolysin</fullName>
    </alternativeName>
</protein>
<proteinExistence type="evidence at protein level"/>
<accession>P40676</accession>
<evidence type="ECO:0000255" key="1">
    <source>
        <dbReference type="HAMAP-Rule" id="MF_01819"/>
    </source>
</evidence>
<evidence type="ECO:0000269" key="2">
    <source>
    </source>
</evidence>
<evidence type="ECO:0000269" key="3">
    <source>
    </source>
</evidence>
<evidence type="ECO:0000269" key="4">
    <source>
    </source>
</evidence>
<evidence type="ECO:0000269" key="5">
    <source>
    </source>
</evidence>
<evidence type="ECO:0000269" key="6">
    <source>
    </source>
</evidence>
<evidence type="ECO:0000269" key="7">
    <source>
    </source>
</evidence>
<evidence type="ECO:0000303" key="8">
    <source>
    </source>
</evidence>
<evidence type="ECO:0000303" key="9">
    <source>
    </source>
</evidence>
<evidence type="ECO:0000305" key="10"/>
<evidence type="ECO:0000305" key="11">
    <source>
    </source>
</evidence>
<evidence type="ECO:0000305" key="12">
    <source>
    </source>
</evidence>
<evidence type="ECO:0007829" key="13">
    <source>
        <dbReference type="PDB" id="3DEU"/>
    </source>
</evidence>
<evidence type="ECO:0007829" key="14">
    <source>
        <dbReference type="PDB" id="3Q5F"/>
    </source>
</evidence>
<sequence>MESPLGSDLARLVRIWRALIDHRLKPLELTQTHWVTLHNIHQLPPDQSQIQLAKAIGIEQPSLVRTLDQLEDKGLISRQTCASDRRAKRIKLTEKADALIAEMEEVIHKTRGEILAGISSEEIELLIKLIAKLEHNIMELHSHD</sequence>
<name>SLYA_SALTY</name>
<keyword id="KW-0002">3D-structure</keyword>
<keyword id="KW-0010">Activator</keyword>
<keyword id="KW-0963">Cytoplasm</keyword>
<keyword id="KW-0238">DNA-binding</keyword>
<keyword id="KW-1185">Reference proteome</keyword>
<keyword id="KW-0678">Repressor</keyword>
<keyword id="KW-0804">Transcription</keyword>
<keyword id="KW-0805">Transcription regulation</keyword>
<keyword id="KW-0843">Virulence</keyword>
<reference key="1">
    <citation type="journal article" date="1994" name="Proc. Natl. Acad. Sci. U.S.A.">
        <title>A cytolysin encoded by Salmonella is required for survival within macrophages.</title>
        <authorList>
            <person name="Libby S.J."/>
            <person name="Goebel W."/>
            <person name="Ludwig A."/>
            <person name="Buchmeier N."/>
            <person name="Bowe F."/>
            <person name="Fang F.C."/>
            <person name="Guiney D.G."/>
            <person name="Songer J.G."/>
            <person name="Heffron F."/>
        </authorList>
    </citation>
    <scope>NUCLEOTIDE SEQUENCE [GENOMIC DNA]</scope>
    <source>
        <strain>ATCC 14028s / SGSG 2262</strain>
    </source>
</reference>
<reference key="2">
    <citation type="journal article" date="2001" name="Nature">
        <title>Complete genome sequence of Salmonella enterica serovar Typhimurium LT2.</title>
        <authorList>
            <person name="McClelland M."/>
            <person name="Sanderson K.E."/>
            <person name="Spieth J."/>
            <person name="Clifton S.W."/>
            <person name="Latreille P."/>
            <person name="Courtney L."/>
            <person name="Porwollik S."/>
            <person name="Ali J."/>
            <person name="Dante M."/>
            <person name="Du F."/>
            <person name="Hou S."/>
            <person name="Layman D."/>
            <person name="Leonard S."/>
            <person name="Nguyen C."/>
            <person name="Scott K."/>
            <person name="Holmes A."/>
            <person name="Grewal N."/>
            <person name="Mulvaney E."/>
            <person name="Ryan E."/>
            <person name="Sun H."/>
            <person name="Florea L."/>
            <person name="Miller W."/>
            <person name="Stoneking T."/>
            <person name="Nhan M."/>
            <person name="Waterston R."/>
            <person name="Wilson R.K."/>
        </authorList>
    </citation>
    <scope>NUCLEOTIDE SEQUENCE [LARGE SCALE GENOMIC DNA]</scope>
    <source>
        <strain>LT2 / SGSC1412 / ATCC 700720</strain>
    </source>
</reference>
<reference key="3">
    <citation type="journal article" date="1995" name="Mol. Gen. Genet.">
        <title>SlyA, a regulatory protein from Salmonella typhimurium, induces a haemolytic and pore-forming protein in Escherichia coli.</title>
        <authorList>
            <person name="Ludwig A."/>
            <person name="Tengel C."/>
            <person name="Bauer S."/>
            <person name="Bubert A."/>
            <person name="Benz R."/>
            <person name="Mollenkopf H.-J."/>
            <person name="Goebel W."/>
        </authorList>
    </citation>
    <scope>SUBCELLULAR LOCATION</scope>
</reference>
<reference key="4">
    <citation type="journal article" date="1995" name="Mol. Microbiol.">
        <title>Homologies between salmolysin and some bacterial regulatory proteins.</title>
        <authorList>
            <person name="Dehoux P."/>
            <person name="Cossart P."/>
        </authorList>
    </citation>
    <scope>SIMILARITY TO MARR FAMILY</scope>
</reference>
<reference key="5">
    <citation type="journal article" date="1997" name="Infect. Immun.">
        <title>SlyA, a transcriptional regulator of Salmonella typhimurium, is required for resistance to oxidative stress and is expressed in the intracellular environment of macrophages.</title>
        <authorList>
            <person name="Buchmeier N."/>
            <person name="Bossie S."/>
            <person name="Chen C.-Y."/>
            <person name="Fang F.C."/>
            <person name="Guiney D.G."/>
            <person name="Libby S.J."/>
        </authorList>
    </citation>
    <scope>FUNCTION</scope>
    <scope>INDUCTION</scope>
</reference>
<reference key="6">
    <citation type="journal article" date="2002" name="J. Biol. Chem.">
        <title>Interaction of the Salmonella typhimurium transcription and virulence factor SlyA with target DNA and identification of members of the SlyA regulon.</title>
        <authorList>
            <person name="Stapleton M.R."/>
            <person name="Norte V.A."/>
            <person name="Read R.C."/>
            <person name="Green J."/>
        </authorList>
    </citation>
    <scope>FUNCTION</scope>
    <scope>HOMODIMERIZATION</scope>
</reference>
<reference key="7">
    <citation type="journal article" date="2003" name="J. Bacteriol.">
        <title>PhoP-responsive expression of the Salmonella enterica serovar typhimurium slyA gene.</title>
        <authorList>
            <person name="Norte V.A."/>
            <person name="Stapleton M.R."/>
            <person name="Green J."/>
        </authorList>
    </citation>
    <scope>INDUCTION</scope>
</reference>
<reference key="8">
    <citation type="journal article" date="2004" name="Mol. Microbiol.">
        <title>The response regulator SsrB activates transcription and binds to a region overlapping OmpR binding sites at Salmonella pathogenicity island 2.</title>
        <authorList>
            <person name="Feng X."/>
            <person name="Walthers D."/>
            <person name="Oropeza R."/>
            <person name="Kenney L.J."/>
        </authorList>
    </citation>
    <scope>FUNCTION</scope>
    <source>
        <strain evidence="8">14028s / SGSC 2262</strain>
    </source>
</reference>
<reference key="9">
    <citation type="journal article" date="2009" name="PLoS Pathog.">
        <title>Coordinated regulation of virulence during systemic infection of Salmonella enterica serovar Typhimurium.</title>
        <authorList>
            <person name="Yoon H."/>
            <person name="McDermott J.E."/>
            <person name="Porwollik S."/>
            <person name="McClelland M."/>
            <person name="Heffron F."/>
        </authorList>
    </citation>
    <scope>FUNCTION</scope>
    <scope>DISRUPTION PHENOTYPE</scope>
    <source>
        <strain evidence="9">14028s / SGSC 2262</strain>
    </source>
</reference>
<dbReference type="EMBL" id="U03842">
    <property type="protein sequence ID" value="AAA58796.1"/>
    <property type="status" value="ALT_INIT"/>
    <property type="molecule type" value="Genomic_DNA"/>
</dbReference>
<dbReference type="EMBL" id="AE006468">
    <property type="protein sequence ID" value="AAL20366.1"/>
    <property type="status" value="ALT_INIT"/>
    <property type="molecule type" value="Genomic_DNA"/>
</dbReference>
<dbReference type="PIR" id="A36874">
    <property type="entry name" value="A36874"/>
</dbReference>
<dbReference type="RefSeq" id="NP_460407.3">
    <property type="nucleotide sequence ID" value="NC_003197.2"/>
</dbReference>
<dbReference type="PDB" id="3DEU">
    <property type="method" value="X-ray"/>
    <property type="resolution" value="2.30 A"/>
    <property type="chains" value="A/B=2-144"/>
</dbReference>
<dbReference type="PDB" id="3Q5F">
    <property type="method" value="X-ray"/>
    <property type="resolution" value="2.96 A"/>
    <property type="chains" value="A/B=1-144"/>
</dbReference>
<dbReference type="PDB" id="3QPT">
    <property type="method" value="X-ray"/>
    <property type="resolution" value="2.40 A"/>
    <property type="chains" value="A=1-144"/>
</dbReference>
<dbReference type="PDBsum" id="3DEU"/>
<dbReference type="PDBsum" id="3Q5F"/>
<dbReference type="PDBsum" id="3QPT"/>
<dbReference type="SMR" id="P40676"/>
<dbReference type="DIP" id="DIP-48666N"/>
<dbReference type="STRING" id="99287.STM1444"/>
<dbReference type="PaxDb" id="99287-STM1444"/>
<dbReference type="GeneID" id="1252962"/>
<dbReference type="KEGG" id="stm:STM1444"/>
<dbReference type="PATRIC" id="fig|99287.12.peg.1527"/>
<dbReference type="HOGENOM" id="CLU_083287_18_2_6"/>
<dbReference type="PhylomeDB" id="P40676"/>
<dbReference type="EvolutionaryTrace" id="P40676"/>
<dbReference type="PHI-base" id="PHI:2678"/>
<dbReference type="Proteomes" id="UP000001014">
    <property type="component" value="Chromosome"/>
</dbReference>
<dbReference type="GO" id="GO:0005737">
    <property type="term" value="C:cytoplasm"/>
    <property type="evidence" value="ECO:0007669"/>
    <property type="project" value="UniProtKB-SubCell"/>
</dbReference>
<dbReference type="GO" id="GO:0003677">
    <property type="term" value="F:DNA binding"/>
    <property type="evidence" value="ECO:0007669"/>
    <property type="project" value="UniProtKB-UniRule"/>
</dbReference>
<dbReference type="GO" id="GO:0003700">
    <property type="term" value="F:DNA-binding transcription factor activity"/>
    <property type="evidence" value="ECO:0007669"/>
    <property type="project" value="UniProtKB-UniRule"/>
</dbReference>
<dbReference type="GO" id="GO:0006355">
    <property type="term" value="P:regulation of DNA-templated transcription"/>
    <property type="evidence" value="ECO:0000318"/>
    <property type="project" value="GO_Central"/>
</dbReference>
<dbReference type="GO" id="GO:0006950">
    <property type="term" value="P:response to stress"/>
    <property type="evidence" value="ECO:0000318"/>
    <property type="project" value="GO_Central"/>
</dbReference>
<dbReference type="FunFam" id="1.10.10.10:FF:000261">
    <property type="entry name" value="Transcriptional regulator SlyA"/>
    <property type="match status" value="1"/>
</dbReference>
<dbReference type="Gene3D" id="1.10.10.10">
    <property type="entry name" value="Winged helix-like DNA-binding domain superfamily/Winged helix DNA-binding domain"/>
    <property type="match status" value="1"/>
</dbReference>
<dbReference type="HAMAP" id="MF_01819">
    <property type="entry name" value="HTH_type_SlyA"/>
    <property type="match status" value="1"/>
</dbReference>
<dbReference type="InterPro" id="IPR000835">
    <property type="entry name" value="HTH_MarR-typ"/>
</dbReference>
<dbReference type="InterPro" id="IPR039422">
    <property type="entry name" value="MarR/SlyA-like"/>
</dbReference>
<dbReference type="InterPro" id="IPR023187">
    <property type="entry name" value="Tscrpt_reg_MarR-type_CS"/>
</dbReference>
<dbReference type="InterPro" id="IPR023071">
    <property type="entry name" value="Tscrpt_reg_SlyA"/>
</dbReference>
<dbReference type="InterPro" id="IPR036388">
    <property type="entry name" value="WH-like_DNA-bd_sf"/>
</dbReference>
<dbReference type="InterPro" id="IPR036390">
    <property type="entry name" value="WH_DNA-bd_sf"/>
</dbReference>
<dbReference type="NCBIfam" id="NF002926">
    <property type="entry name" value="PRK03573.1"/>
    <property type="match status" value="1"/>
</dbReference>
<dbReference type="PANTHER" id="PTHR33164:SF64">
    <property type="entry name" value="TRANSCRIPTIONAL REGULATOR SLYA"/>
    <property type="match status" value="1"/>
</dbReference>
<dbReference type="PANTHER" id="PTHR33164">
    <property type="entry name" value="TRANSCRIPTIONAL REGULATOR, MARR FAMILY"/>
    <property type="match status" value="1"/>
</dbReference>
<dbReference type="Pfam" id="PF01047">
    <property type="entry name" value="MarR"/>
    <property type="match status" value="1"/>
</dbReference>
<dbReference type="PRINTS" id="PR00598">
    <property type="entry name" value="HTHMARR"/>
</dbReference>
<dbReference type="SMART" id="SM00347">
    <property type="entry name" value="HTH_MARR"/>
    <property type="match status" value="1"/>
</dbReference>
<dbReference type="SUPFAM" id="SSF46785">
    <property type="entry name" value="Winged helix' DNA-binding domain"/>
    <property type="match status" value="1"/>
</dbReference>
<dbReference type="PROSITE" id="PS01117">
    <property type="entry name" value="HTH_MARR_1"/>
    <property type="match status" value="1"/>
</dbReference>
<dbReference type="PROSITE" id="PS50995">
    <property type="entry name" value="HTH_MARR_2"/>
    <property type="match status" value="1"/>
</dbReference>
<comment type="function">
    <text evidence="1 2 4 5 7">Transcription regulator that can specifically activate or repress expression of target genes (By similarity). Required for virulence and survival in the macrophage environment (PubMed:9284144). Probably activates the transcription of ssrB (PubMed:15491370, PubMed:19229334). Independently of ssrB activation, capable of stimulating the expression of virulence genes found on pathogenicity island 2 (SPI2) (PubMed:19229334). Probably activates expression of ispA, xseB genes, and of omp operon (PubMed:11882648).</text>
</comment>
<comment type="subunit">
    <text evidence="2">Homodimer.</text>
</comment>
<comment type="subcellular location">
    <subcellularLocation>
        <location evidence="6">Cytoplasm</location>
    </subcellularLocation>
</comment>
<comment type="induction">
    <text evidence="3 7">During infection of the host cells. Down-regulated by itself. Activated by Mg(2+) starvation in a phoP dependent manner.</text>
</comment>
<comment type="disruption phenotype">
    <text evidence="5">Decreases expression of genes encoding virulence proteins (PubMed:19229334). Decreases virulence in mouse (PubMed:19229334).</text>
</comment>
<comment type="similarity">
    <text evidence="1">Belongs to the SlyA family.</text>
</comment>
<comment type="caution">
    <text evidence="11 12">Was originally thought to be a toxin with hemolytic and cytolytic activity but this was later refuted.</text>
</comment>
<comment type="sequence caution" evidence="10">
    <conflict type="erroneous initiation">
        <sequence resource="EMBL-CDS" id="AAA58796"/>
    </conflict>
    <text>Extended N-terminus.</text>
</comment>
<comment type="sequence caution" evidence="10">
    <conflict type="erroneous initiation">
        <sequence resource="EMBL-CDS" id="AAL20366"/>
    </conflict>
    <text>Extended N-terminus.</text>
</comment>
<gene>
    <name evidence="1" type="primary">slyA</name>
    <name type="ordered locus">STM1444</name>
</gene>
<feature type="chain" id="PRO_0000054393" description="Transcriptional regulator SlyA">
    <location>
        <begin position="1"/>
        <end position="144"/>
    </location>
</feature>
<feature type="domain" description="HTH marR-type" evidence="1">
    <location>
        <begin position="2"/>
        <end position="135"/>
    </location>
</feature>
<feature type="DNA-binding region" description="H-T-H motif" evidence="1">
    <location>
        <begin position="49"/>
        <end position="72"/>
    </location>
</feature>
<feature type="sequence conflict" description="In Ref. 1; AAA58796." evidence="10" ref="1">
    <original>DA</original>
    <variation>EP</variation>
    <location>
        <begin position="97"/>
        <end position="98"/>
    </location>
</feature>
<feature type="helix" evidence="13">
    <location>
        <begin position="5"/>
        <end position="23"/>
    </location>
</feature>
<feature type="turn" evidence="13">
    <location>
        <begin position="24"/>
        <end position="28"/>
    </location>
</feature>
<feature type="helix" evidence="13">
    <location>
        <begin position="31"/>
        <end position="42"/>
    </location>
</feature>
<feature type="strand" evidence="13">
    <location>
        <begin position="45"/>
        <end position="48"/>
    </location>
</feature>
<feature type="helix" evidence="13">
    <location>
        <begin position="49"/>
        <end position="56"/>
    </location>
</feature>
<feature type="helix" evidence="13">
    <location>
        <begin position="60"/>
        <end position="72"/>
    </location>
</feature>
<feature type="strand" evidence="13">
    <location>
        <begin position="75"/>
        <end position="78"/>
    </location>
</feature>
<feature type="strand" evidence="14">
    <location>
        <begin position="82"/>
        <end position="84"/>
    </location>
</feature>
<feature type="strand" evidence="13">
    <location>
        <begin position="89"/>
        <end position="92"/>
    </location>
</feature>
<feature type="helix" evidence="13">
    <location>
        <begin position="94"/>
        <end position="96"/>
    </location>
</feature>
<feature type="helix" evidence="13">
    <location>
        <begin position="97"/>
        <end position="115"/>
    </location>
</feature>
<feature type="helix" evidence="13">
    <location>
        <begin position="120"/>
        <end position="139"/>
    </location>
</feature>